<protein>
    <recommendedName>
        <fullName evidence="1">Uroporphyrinogen decarboxylase</fullName>
        <shortName evidence="1">UPD</shortName>
        <shortName evidence="1">URO-D</shortName>
        <ecNumber evidence="1">4.1.1.37</ecNumber>
    </recommendedName>
</protein>
<dbReference type="EC" id="4.1.1.37" evidence="1"/>
<dbReference type="EMBL" id="CP000548">
    <property type="protein sequence ID" value="ABO05262.1"/>
    <property type="molecule type" value="Genomic_DNA"/>
</dbReference>
<dbReference type="RefSeq" id="WP_004195837.1">
    <property type="nucleotide sequence ID" value="NZ_CP007802.1"/>
</dbReference>
<dbReference type="SMR" id="A3MQK6"/>
<dbReference type="GeneID" id="92980634"/>
<dbReference type="KEGG" id="bmaz:BM44_328"/>
<dbReference type="KEGG" id="bmn:BMA10247_3022"/>
<dbReference type="PATRIC" id="fig|320389.8.peg.361"/>
<dbReference type="UniPathway" id="UPA00251">
    <property type="reaction ID" value="UER00321"/>
</dbReference>
<dbReference type="GO" id="GO:0005829">
    <property type="term" value="C:cytosol"/>
    <property type="evidence" value="ECO:0007669"/>
    <property type="project" value="TreeGrafter"/>
</dbReference>
<dbReference type="GO" id="GO:0004853">
    <property type="term" value="F:uroporphyrinogen decarboxylase activity"/>
    <property type="evidence" value="ECO:0007669"/>
    <property type="project" value="UniProtKB-UniRule"/>
</dbReference>
<dbReference type="GO" id="GO:0019353">
    <property type="term" value="P:protoporphyrinogen IX biosynthetic process from glutamate"/>
    <property type="evidence" value="ECO:0007669"/>
    <property type="project" value="TreeGrafter"/>
</dbReference>
<dbReference type="CDD" id="cd00717">
    <property type="entry name" value="URO-D"/>
    <property type="match status" value="1"/>
</dbReference>
<dbReference type="FunFam" id="3.20.20.210:FF:000001">
    <property type="entry name" value="Uroporphyrinogen decarboxylase"/>
    <property type="match status" value="1"/>
</dbReference>
<dbReference type="Gene3D" id="3.20.20.210">
    <property type="match status" value="1"/>
</dbReference>
<dbReference type="HAMAP" id="MF_00218">
    <property type="entry name" value="URO_D"/>
    <property type="match status" value="1"/>
</dbReference>
<dbReference type="InterPro" id="IPR038071">
    <property type="entry name" value="UROD/MetE-like_sf"/>
</dbReference>
<dbReference type="InterPro" id="IPR006361">
    <property type="entry name" value="Uroporphyrinogen_deCO2ase_HemE"/>
</dbReference>
<dbReference type="InterPro" id="IPR000257">
    <property type="entry name" value="Uroporphyrinogen_deCOase"/>
</dbReference>
<dbReference type="NCBIfam" id="TIGR01464">
    <property type="entry name" value="hemE"/>
    <property type="match status" value="1"/>
</dbReference>
<dbReference type="PANTHER" id="PTHR21091">
    <property type="entry name" value="METHYLTETRAHYDROFOLATE:HOMOCYSTEINE METHYLTRANSFERASE RELATED"/>
    <property type="match status" value="1"/>
</dbReference>
<dbReference type="PANTHER" id="PTHR21091:SF169">
    <property type="entry name" value="UROPORPHYRINOGEN DECARBOXYLASE"/>
    <property type="match status" value="1"/>
</dbReference>
<dbReference type="Pfam" id="PF01208">
    <property type="entry name" value="URO-D"/>
    <property type="match status" value="1"/>
</dbReference>
<dbReference type="SUPFAM" id="SSF51726">
    <property type="entry name" value="UROD/MetE-like"/>
    <property type="match status" value="1"/>
</dbReference>
<dbReference type="PROSITE" id="PS00906">
    <property type="entry name" value="UROD_1"/>
    <property type="match status" value="1"/>
</dbReference>
<dbReference type="PROSITE" id="PS00907">
    <property type="entry name" value="UROD_2"/>
    <property type="match status" value="1"/>
</dbReference>
<evidence type="ECO:0000255" key="1">
    <source>
        <dbReference type="HAMAP-Rule" id="MF_00218"/>
    </source>
</evidence>
<accession>A3MQK6</accession>
<organism>
    <name type="scientific">Burkholderia mallei (strain NCTC 10247)</name>
    <dbReference type="NCBI Taxonomy" id="320389"/>
    <lineage>
        <taxon>Bacteria</taxon>
        <taxon>Pseudomonadati</taxon>
        <taxon>Pseudomonadota</taxon>
        <taxon>Betaproteobacteria</taxon>
        <taxon>Burkholderiales</taxon>
        <taxon>Burkholderiaceae</taxon>
        <taxon>Burkholderia</taxon>
        <taxon>pseudomallei group</taxon>
    </lineage>
</organism>
<feature type="chain" id="PRO_1000023879" description="Uroporphyrinogen decarboxylase">
    <location>
        <begin position="1"/>
        <end position="364"/>
    </location>
</feature>
<feature type="binding site" evidence="1">
    <location>
        <begin position="28"/>
        <end position="32"/>
    </location>
    <ligand>
        <name>substrate</name>
    </ligand>
</feature>
<feature type="binding site" evidence="1">
    <location>
        <position position="78"/>
    </location>
    <ligand>
        <name>substrate</name>
    </ligand>
</feature>
<feature type="binding site" evidence="1">
    <location>
        <position position="160"/>
    </location>
    <ligand>
        <name>substrate</name>
    </ligand>
</feature>
<feature type="binding site" evidence="1">
    <location>
        <position position="215"/>
    </location>
    <ligand>
        <name>substrate</name>
    </ligand>
</feature>
<feature type="binding site" evidence="1">
    <location>
        <position position="333"/>
    </location>
    <ligand>
        <name>substrate</name>
    </ligand>
</feature>
<feature type="site" description="Transition state stabilizer" evidence="1">
    <location>
        <position position="78"/>
    </location>
</feature>
<gene>
    <name evidence="1" type="primary">hemE</name>
    <name type="ordered locus">BMA10247_3022</name>
</gene>
<name>DCUP_BURM7</name>
<keyword id="KW-0963">Cytoplasm</keyword>
<keyword id="KW-0210">Decarboxylase</keyword>
<keyword id="KW-0456">Lyase</keyword>
<keyword id="KW-0627">Porphyrin biosynthesis</keyword>
<comment type="function">
    <text evidence="1">Catalyzes the decarboxylation of four acetate groups of uroporphyrinogen-III to yield coproporphyrinogen-III.</text>
</comment>
<comment type="catalytic activity">
    <reaction evidence="1">
        <text>uroporphyrinogen III + 4 H(+) = coproporphyrinogen III + 4 CO2</text>
        <dbReference type="Rhea" id="RHEA:19865"/>
        <dbReference type="ChEBI" id="CHEBI:15378"/>
        <dbReference type="ChEBI" id="CHEBI:16526"/>
        <dbReference type="ChEBI" id="CHEBI:57308"/>
        <dbReference type="ChEBI" id="CHEBI:57309"/>
        <dbReference type="EC" id="4.1.1.37"/>
    </reaction>
</comment>
<comment type="pathway">
    <text evidence="1">Porphyrin-containing compound metabolism; protoporphyrin-IX biosynthesis; coproporphyrinogen-III from 5-aminolevulinate: step 4/4.</text>
</comment>
<comment type="subunit">
    <text evidence="1">Homodimer.</text>
</comment>
<comment type="subcellular location">
    <subcellularLocation>
        <location evidence="1">Cytoplasm</location>
    </subcellularLocation>
</comment>
<comment type="similarity">
    <text evidence="1">Belongs to the uroporphyrinogen decarboxylase family.</text>
</comment>
<sequence length="364" mass="39458">MAQTLLNDTFLRALLREPTDYTPIWLMRQAGRYLPEYNATRARAGSFLGLAKQPDYATEVTLQPLERFPLDAAILFSDILTIPDAMGLGLDFAAGEGPKFAHPVRTEADVAKLAVPDIGATLGYVTDAVREIRRALTDGEGRQRVPLIGFSGSPWTLACYMVEGGGSDDFRTVKSMAYARPDLMHRILDVNAQAVAAYLNAQIEAGAQAVMIFDTWGGALADGGYQRFSLDYVRRVLAQLKREHDGARVPAIAFTKGGGLWLEELAATGVDAVGLDWTVNLGRARERVAGRVALQGNLDPTILFAPPEAIRAEARAVLDSYGNHPGHVFNLGHGISQFTPPEHVAELVDEVHRHSRAIRSGAGS</sequence>
<reference key="1">
    <citation type="journal article" date="2010" name="Genome Biol. Evol.">
        <title>Continuing evolution of Burkholderia mallei through genome reduction and large-scale rearrangements.</title>
        <authorList>
            <person name="Losada L."/>
            <person name="Ronning C.M."/>
            <person name="DeShazer D."/>
            <person name="Woods D."/>
            <person name="Fedorova N."/>
            <person name="Kim H.S."/>
            <person name="Shabalina S.A."/>
            <person name="Pearson T.R."/>
            <person name="Brinkac L."/>
            <person name="Tan P."/>
            <person name="Nandi T."/>
            <person name="Crabtree J."/>
            <person name="Badger J."/>
            <person name="Beckstrom-Sternberg S."/>
            <person name="Saqib M."/>
            <person name="Schutzer S.E."/>
            <person name="Keim P."/>
            <person name="Nierman W.C."/>
        </authorList>
    </citation>
    <scope>NUCLEOTIDE SEQUENCE [LARGE SCALE GENOMIC DNA]</scope>
    <source>
        <strain>NCTC 10247</strain>
    </source>
</reference>
<proteinExistence type="inferred from homology"/>